<protein>
    <recommendedName>
        <fullName>Uncharacterized nucleolar protein C2C4.08</fullName>
    </recommendedName>
</protein>
<comment type="subcellular location">
    <subcellularLocation>
        <location evidence="1">Nucleus</location>
        <location evidence="1">Nucleolus</location>
    </subcellularLocation>
</comment>
<accession>O14041</accession>
<evidence type="ECO:0000269" key="1">
    <source>
    </source>
</evidence>
<dbReference type="EMBL" id="CU329670">
    <property type="protein sequence ID" value="CAB16368.1"/>
    <property type="molecule type" value="Genomic_DNA"/>
</dbReference>
<dbReference type="PIR" id="T38519">
    <property type="entry name" value="T38519"/>
</dbReference>
<dbReference type="RefSeq" id="NP_594511.1">
    <property type="nucleotide sequence ID" value="NM_001019940.2"/>
</dbReference>
<dbReference type="SMR" id="O14041"/>
<dbReference type="STRING" id="284812.O14041"/>
<dbReference type="iPTMnet" id="O14041"/>
<dbReference type="PaxDb" id="4896-SPAC2C4.08.1"/>
<dbReference type="EnsemblFungi" id="SPAC2C4.08.1">
    <property type="protein sequence ID" value="SPAC2C4.08.1:pep"/>
    <property type="gene ID" value="SPAC2C4.08"/>
</dbReference>
<dbReference type="KEGG" id="spo:2542648"/>
<dbReference type="PomBase" id="SPAC2C4.08"/>
<dbReference type="VEuPathDB" id="FungiDB:SPAC2C4.08"/>
<dbReference type="HOGENOM" id="CLU_099954_0_0_1"/>
<dbReference type="InParanoid" id="O14041"/>
<dbReference type="OMA" id="FCLHNAG"/>
<dbReference type="PhylomeDB" id="O14041"/>
<dbReference type="PRO" id="PR:O14041"/>
<dbReference type="Proteomes" id="UP000002485">
    <property type="component" value="Chromosome I"/>
</dbReference>
<dbReference type="GO" id="GO:0005730">
    <property type="term" value="C:nucleolus"/>
    <property type="evidence" value="ECO:0007005"/>
    <property type="project" value="PomBase"/>
</dbReference>
<dbReference type="GO" id="GO:0005634">
    <property type="term" value="C:nucleus"/>
    <property type="evidence" value="ECO:0007005"/>
    <property type="project" value="PomBase"/>
</dbReference>
<dbReference type="GO" id="GO:0003676">
    <property type="term" value="F:nucleic acid binding"/>
    <property type="evidence" value="ECO:0007669"/>
    <property type="project" value="InterPro"/>
</dbReference>
<dbReference type="Gene3D" id="3.30.420.10">
    <property type="entry name" value="Ribonuclease H-like superfamily/Ribonuclease H"/>
    <property type="match status" value="1"/>
</dbReference>
<dbReference type="InterPro" id="IPR040151">
    <property type="entry name" value="Gfd2/YDR514C-like"/>
</dbReference>
<dbReference type="InterPro" id="IPR048519">
    <property type="entry name" value="Gfd2/YDR514C-like_C"/>
</dbReference>
<dbReference type="InterPro" id="IPR012337">
    <property type="entry name" value="RNaseH-like_sf"/>
</dbReference>
<dbReference type="InterPro" id="IPR036397">
    <property type="entry name" value="RNaseH_sf"/>
</dbReference>
<dbReference type="PANTHER" id="PTHR28083">
    <property type="entry name" value="GOOD FOR FULL DBP5 ACTIVITY PROTEIN 2"/>
    <property type="match status" value="1"/>
</dbReference>
<dbReference type="PANTHER" id="PTHR28083:SF1">
    <property type="entry name" value="GOOD FOR FULL DBP5 ACTIVITY PROTEIN 2"/>
    <property type="match status" value="1"/>
</dbReference>
<dbReference type="Pfam" id="PF21762">
    <property type="entry name" value="DEDDh_C"/>
    <property type="match status" value="1"/>
</dbReference>
<dbReference type="SUPFAM" id="SSF53098">
    <property type="entry name" value="Ribonuclease H-like"/>
    <property type="match status" value="1"/>
</dbReference>
<proteinExistence type="predicted"/>
<keyword id="KW-0539">Nucleus</keyword>
<keyword id="KW-1185">Reference proteome</keyword>
<sequence>MNRLQAKKAVNVSRHEQKRIRYKLTPEEVKAERKERKRRAAIQRAEKKLIRAKGEALVAFQAVSNPSCNFLVIDFEAYEFNQKIITEAGITMRINGEWDYHHYRIKNFLHLRNGRFVPDEADNFQFGDSKIVTKIAFISILKKILKTPNLHLVGHGVENEIKYANVLGIPIPKDVTVLDTQNVFSFFQSLFLKEISNSNNISLAKMLTHLNIRAFCLHNAGNDARYTSEALREMTNKFTLSNF</sequence>
<gene>
    <name type="ORF">SPAC2C4.08</name>
</gene>
<feature type="chain" id="PRO_0000352826" description="Uncharacterized nucleolar protein C2C4.08">
    <location>
        <begin position="1"/>
        <end position="243"/>
    </location>
</feature>
<name>YEY8_SCHPO</name>
<organism>
    <name type="scientific">Schizosaccharomyces pombe (strain 972 / ATCC 24843)</name>
    <name type="common">Fission yeast</name>
    <dbReference type="NCBI Taxonomy" id="284812"/>
    <lineage>
        <taxon>Eukaryota</taxon>
        <taxon>Fungi</taxon>
        <taxon>Dikarya</taxon>
        <taxon>Ascomycota</taxon>
        <taxon>Taphrinomycotina</taxon>
        <taxon>Schizosaccharomycetes</taxon>
        <taxon>Schizosaccharomycetales</taxon>
        <taxon>Schizosaccharomycetaceae</taxon>
        <taxon>Schizosaccharomyces</taxon>
    </lineage>
</organism>
<reference key="1">
    <citation type="journal article" date="2002" name="Nature">
        <title>The genome sequence of Schizosaccharomyces pombe.</title>
        <authorList>
            <person name="Wood V."/>
            <person name="Gwilliam R."/>
            <person name="Rajandream M.A."/>
            <person name="Lyne M.H."/>
            <person name="Lyne R."/>
            <person name="Stewart A."/>
            <person name="Sgouros J.G."/>
            <person name="Peat N."/>
            <person name="Hayles J."/>
            <person name="Baker S.G."/>
            <person name="Basham D."/>
            <person name="Bowman S."/>
            <person name="Brooks K."/>
            <person name="Brown D."/>
            <person name="Brown S."/>
            <person name="Chillingworth T."/>
            <person name="Churcher C.M."/>
            <person name="Collins M."/>
            <person name="Connor R."/>
            <person name="Cronin A."/>
            <person name="Davis P."/>
            <person name="Feltwell T."/>
            <person name="Fraser A."/>
            <person name="Gentles S."/>
            <person name="Goble A."/>
            <person name="Hamlin N."/>
            <person name="Harris D.E."/>
            <person name="Hidalgo J."/>
            <person name="Hodgson G."/>
            <person name="Holroyd S."/>
            <person name="Hornsby T."/>
            <person name="Howarth S."/>
            <person name="Huckle E.J."/>
            <person name="Hunt S."/>
            <person name="Jagels K."/>
            <person name="James K.D."/>
            <person name="Jones L."/>
            <person name="Jones M."/>
            <person name="Leather S."/>
            <person name="McDonald S."/>
            <person name="McLean J."/>
            <person name="Mooney P."/>
            <person name="Moule S."/>
            <person name="Mungall K.L."/>
            <person name="Murphy L.D."/>
            <person name="Niblett D."/>
            <person name="Odell C."/>
            <person name="Oliver K."/>
            <person name="O'Neil S."/>
            <person name="Pearson D."/>
            <person name="Quail M.A."/>
            <person name="Rabbinowitsch E."/>
            <person name="Rutherford K.M."/>
            <person name="Rutter S."/>
            <person name="Saunders D."/>
            <person name="Seeger K."/>
            <person name="Sharp S."/>
            <person name="Skelton J."/>
            <person name="Simmonds M.N."/>
            <person name="Squares R."/>
            <person name="Squares S."/>
            <person name="Stevens K."/>
            <person name="Taylor K."/>
            <person name="Taylor R.G."/>
            <person name="Tivey A."/>
            <person name="Walsh S.V."/>
            <person name="Warren T."/>
            <person name="Whitehead S."/>
            <person name="Woodward J.R."/>
            <person name="Volckaert G."/>
            <person name="Aert R."/>
            <person name="Robben J."/>
            <person name="Grymonprez B."/>
            <person name="Weltjens I."/>
            <person name="Vanstreels E."/>
            <person name="Rieger M."/>
            <person name="Schaefer M."/>
            <person name="Mueller-Auer S."/>
            <person name="Gabel C."/>
            <person name="Fuchs M."/>
            <person name="Duesterhoeft A."/>
            <person name="Fritzc C."/>
            <person name="Holzer E."/>
            <person name="Moestl D."/>
            <person name="Hilbert H."/>
            <person name="Borzym K."/>
            <person name="Langer I."/>
            <person name="Beck A."/>
            <person name="Lehrach H."/>
            <person name="Reinhardt R."/>
            <person name="Pohl T.M."/>
            <person name="Eger P."/>
            <person name="Zimmermann W."/>
            <person name="Wedler H."/>
            <person name="Wambutt R."/>
            <person name="Purnelle B."/>
            <person name="Goffeau A."/>
            <person name="Cadieu E."/>
            <person name="Dreano S."/>
            <person name="Gloux S."/>
            <person name="Lelaure V."/>
            <person name="Mottier S."/>
            <person name="Galibert F."/>
            <person name="Aves S.J."/>
            <person name="Xiang Z."/>
            <person name="Hunt C."/>
            <person name="Moore K."/>
            <person name="Hurst S.M."/>
            <person name="Lucas M."/>
            <person name="Rochet M."/>
            <person name="Gaillardin C."/>
            <person name="Tallada V.A."/>
            <person name="Garzon A."/>
            <person name="Thode G."/>
            <person name="Daga R.R."/>
            <person name="Cruzado L."/>
            <person name="Jimenez J."/>
            <person name="Sanchez M."/>
            <person name="del Rey F."/>
            <person name="Benito J."/>
            <person name="Dominguez A."/>
            <person name="Revuelta J.L."/>
            <person name="Moreno S."/>
            <person name="Armstrong J."/>
            <person name="Forsburg S.L."/>
            <person name="Cerutti L."/>
            <person name="Lowe T."/>
            <person name="McCombie W.R."/>
            <person name="Paulsen I."/>
            <person name="Potashkin J."/>
            <person name="Shpakovski G.V."/>
            <person name="Ussery D."/>
            <person name="Barrell B.G."/>
            <person name="Nurse P."/>
        </authorList>
    </citation>
    <scope>NUCLEOTIDE SEQUENCE [LARGE SCALE GENOMIC DNA]</scope>
    <source>
        <strain>972 / ATCC 24843</strain>
    </source>
</reference>
<reference key="2">
    <citation type="journal article" date="2006" name="Nat. Biotechnol.">
        <title>ORFeome cloning and global analysis of protein localization in the fission yeast Schizosaccharomyces pombe.</title>
        <authorList>
            <person name="Matsuyama A."/>
            <person name="Arai R."/>
            <person name="Yashiroda Y."/>
            <person name="Shirai A."/>
            <person name="Kamata A."/>
            <person name="Sekido S."/>
            <person name="Kobayashi Y."/>
            <person name="Hashimoto A."/>
            <person name="Hamamoto M."/>
            <person name="Hiraoka Y."/>
            <person name="Horinouchi S."/>
            <person name="Yoshida M."/>
        </authorList>
    </citation>
    <scope>SUBCELLULAR LOCATION [LARGE SCALE ANALYSIS]</scope>
</reference>